<feature type="chain" id="PRO_0000395835" description="Ubiquitin carboxyl-terminal hydrolase calypso">
    <location>
        <begin position="1"/>
        <end position="471"/>
    </location>
</feature>
<feature type="domain" description="UCH catalytic" evidence="2">
    <location>
        <begin position="45"/>
        <end position="276"/>
    </location>
</feature>
<feature type="domain" description="ULD" evidence="3">
    <location>
        <begin position="375"/>
        <end position="403"/>
    </location>
</feature>
<feature type="region of interest" description="Positively charged C-terminal tail required for binding nucleosomes" evidence="1">
    <location>
        <begin position="405"/>
        <end position="471"/>
    </location>
</feature>
<feature type="region of interest" description="Disordered" evidence="4">
    <location>
        <begin position="410"/>
        <end position="471"/>
    </location>
</feature>
<feature type="compositionally biased region" description="Low complexity" evidence="4">
    <location>
        <begin position="420"/>
        <end position="447"/>
    </location>
</feature>
<feature type="compositionally biased region" description="Basic residues" evidence="4">
    <location>
        <begin position="457"/>
        <end position="471"/>
    </location>
</feature>
<feature type="active site" description="Nucleophile" evidence="2">
    <location>
        <position position="131"/>
    </location>
</feature>
<feature type="active site" description="Proton donor" evidence="2">
    <location>
        <position position="213"/>
    </location>
</feature>
<feature type="site" description="Transition state stabilizer" evidence="2">
    <location>
        <position position="125"/>
    </location>
</feature>
<feature type="site" description="Important for enzyme activity" evidence="2">
    <location>
        <position position="228"/>
    </location>
</feature>
<accession>B4P6P6</accession>
<keyword id="KW-0156">Chromatin regulator</keyword>
<keyword id="KW-0378">Hydrolase</keyword>
<keyword id="KW-0539">Nucleus</keyword>
<keyword id="KW-0645">Protease</keyword>
<keyword id="KW-0788">Thiol protease</keyword>
<keyword id="KW-0833">Ubl conjugation pathway</keyword>
<protein>
    <recommendedName>
        <fullName evidence="1">Ubiquitin carboxyl-terminal hydrolase calypso</fullName>
        <ecNumber evidence="1">3.4.19.12</ecNumber>
    </recommendedName>
    <alternativeName>
        <fullName evidence="1">BRCA1-associated protein 1 homolog</fullName>
        <shortName evidence="1">BAP1 homolog</shortName>
    </alternativeName>
    <alternativeName>
        <fullName evidence="1">Polycomb group protein calypso</fullName>
    </alternativeName>
</protein>
<proteinExistence type="inferred from homology"/>
<name>CALYP_DROYA</name>
<sequence>MNAAGGGSGSQAAGAAGVNSSLSHNALLSTASGATTMPMAQLADGWLELESDPGLFTLLLKDFGCHDVQVEEVYDLQKPIESPYGFIFLFRWIEERRARRKIVETTAEIFVKDEEAISSIFFAQQVVPNSCATHALLSVLLNCNENNLQLGDTLSRLKAHTKGMSPENKGLAIGNTPELACAHNSHAMPQARRRLERTGAGVSSCRFTGEAFHFVSFVPINGQLFELDGLKPYPMNHGGWEDSEDWTDKFRRVMAERLGIATGEQDIRFNLMAVVPDRRIAITHKLKMLRTNQAIVSGTLQKLLKADEQGESGNGDSQRPDTPTTLLEPSAFTARDLQSLLKNLDTEIAINEQHLADENDRRHMFKVDASRRTHNYDKFICTFLSMLAHQGVLGELVSQHLLPSKKVSGQGAANRISKQSTTASAGGSTTGATASTPKTQQQQAAAAKNGKSPSKTPGRRRKGRNKCRKRK</sequence>
<comment type="function">
    <text evidence="1">Catalytic component of the polycomb repressive deubiquitinase (PR-DUB) complex, a complex that specifically mediates deubiquitination of histone H2A monoubiquitinated at 'Lys-119' (H2AK118ub1). Mediates bisymmetric organization of the PR-DUB complex and is involved in association with nucleosomes to mediate deubiquitination. Does not deubiquitinate monoubiquitinated histone H2B. Required to maintain the transcriptionally repressive state of homeotic genes throughout development. The PR-DUB complex has weak or no activity toward 'Lys-48'- and 'Lys-63'-linked polyubiquitin chains. Polycomb group (PcG) protein.</text>
</comment>
<comment type="catalytic activity">
    <reaction evidence="1">
        <text>Thiol-dependent hydrolysis of ester, thioester, amide, peptide and isopeptide bonds formed by the C-terminal Gly of ubiquitin (a 76-residue protein attached to proteins as an intracellular targeting signal).</text>
        <dbReference type="EC" id="3.4.19.12"/>
    </reaction>
</comment>
<comment type="subunit">
    <text evidence="1">Catalytic component of the polycomb repressive deubiquitinase (PR-DUB) complex, at least composed of caly/calypso, Asx and sba (MBD5/6 homolog). The PR-DUB complex associates with nucleosomes to mediate deubiquitination of histone H2AK118ub1 substrates; the association requires the positively charged C-terminal tail of caly, probably due to direct binding of DNA. Interacts (via ULD domain) with Asx (via DEUBAD domain); the interaction produces a stable heterodimer with a composite binding site for ubiquitin. Homodimerizes (via coiled-coil hinge-region between the UCH and ULD domains) to mediate assembly of 2 copies of the caly-Asx heterodimer into a bisymmetric tetramer; dimerization enhances PR-DUB association with nucleosomes.</text>
</comment>
<comment type="subcellular location">
    <subcellularLocation>
        <location evidence="1">Nucleus</location>
    </subcellularLocation>
    <text evidence="1">Localizes to PcG response elements (PREs).</text>
</comment>
<comment type="similarity">
    <text evidence="5">Belongs to the peptidase C12 family. BAP1 subfamily.</text>
</comment>
<organism>
    <name type="scientific">Drosophila yakuba</name>
    <name type="common">Fruit fly</name>
    <dbReference type="NCBI Taxonomy" id="7245"/>
    <lineage>
        <taxon>Eukaryota</taxon>
        <taxon>Metazoa</taxon>
        <taxon>Ecdysozoa</taxon>
        <taxon>Arthropoda</taxon>
        <taxon>Hexapoda</taxon>
        <taxon>Insecta</taxon>
        <taxon>Pterygota</taxon>
        <taxon>Neoptera</taxon>
        <taxon>Endopterygota</taxon>
        <taxon>Diptera</taxon>
        <taxon>Brachycera</taxon>
        <taxon>Muscomorpha</taxon>
        <taxon>Ephydroidea</taxon>
        <taxon>Drosophilidae</taxon>
        <taxon>Drosophila</taxon>
        <taxon>Sophophora</taxon>
    </lineage>
</organism>
<evidence type="ECO:0000250" key="1">
    <source>
        <dbReference type="UniProtKB" id="Q7K5N4"/>
    </source>
</evidence>
<evidence type="ECO:0000255" key="2">
    <source>
        <dbReference type="PROSITE-ProRule" id="PRU01393"/>
    </source>
</evidence>
<evidence type="ECO:0000255" key="3">
    <source>
        <dbReference type="PROSITE-ProRule" id="PRU01394"/>
    </source>
</evidence>
<evidence type="ECO:0000256" key="4">
    <source>
        <dbReference type="SAM" id="MobiDB-lite"/>
    </source>
</evidence>
<evidence type="ECO:0000305" key="5"/>
<reference key="1">
    <citation type="journal article" date="2007" name="Nature">
        <title>Evolution of genes and genomes on the Drosophila phylogeny.</title>
        <authorList>
            <consortium name="Drosophila 12 genomes consortium"/>
        </authorList>
    </citation>
    <scope>NUCLEOTIDE SEQUENCE [LARGE SCALE GENOMIC DNA]</scope>
    <source>
        <strain>Tai18E2 / Tucson 14021-0261.01</strain>
    </source>
</reference>
<gene>
    <name evidence="1" type="primary">caly</name>
    <name evidence="1" type="synonym">BAP1</name>
    <name type="ORF">GE14091</name>
</gene>
<dbReference type="EC" id="3.4.19.12" evidence="1"/>
<dbReference type="EMBL" id="CM000158">
    <property type="protein sequence ID" value="EDW91973.1"/>
    <property type="molecule type" value="Genomic_DNA"/>
</dbReference>
<dbReference type="SMR" id="B4P6P6"/>
<dbReference type="MEROPS" id="C12.A09"/>
<dbReference type="EnsemblMetazoa" id="FBtr0260609">
    <property type="protein sequence ID" value="FBpp0259101"/>
    <property type="gene ID" value="FBgn0231717"/>
</dbReference>
<dbReference type="EnsemblMetazoa" id="XM_002092225.4">
    <property type="protein sequence ID" value="XP_002092261.1"/>
    <property type="gene ID" value="LOC6531462"/>
</dbReference>
<dbReference type="GeneID" id="6531462"/>
<dbReference type="KEGG" id="dya:Dyak_GE14091"/>
<dbReference type="CTD" id="136037741"/>
<dbReference type="eggNOG" id="KOG2778">
    <property type="taxonomic scope" value="Eukaryota"/>
</dbReference>
<dbReference type="HOGENOM" id="CLU_018316_2_1_1"/>
<dbReference type="OMA" id="MNHGCWE"/>
<dbReference type="OrthoDB" id="1924260at2759"/>
<dbReference type="PhylomeDB" id="B4P6P6"/>
<dbReference type="Proteomes" id="UP000002282">
    <property type="component" value="Chromosome 2R"/>
</dbReference>
<dbReference type="GO" id="GO:0000785">
    <property type="term" value="C:chromatin"/>
    <property type="evidence" value="ECO:0000250"/>
    <property type="project" value="UniProtKB"/>
</dbReference>
<dbReference type="GO" id="GO:0005737">
    <property type="term" value="C:cytoplasm"/>
    <property type="evidence" value="ECO:0007669"/>
    <property type="project" value="TreeGrafter"/>
</dbReference>
<dbReference type="GO" id="GO:0035517">
    <property type="term" value="C:PR-DUB complex"/>
    <property type="evidence" value="ECO:0000250"/>
    <property type="project" value="UniProtKB"/>
</dbReference>
<dbReference type="GO" id="GO:0003682">
    <property type="term" value="F:chromatin binding"/>
    <property type="evidence" value="ECO:0000250"/>
    <property type="project" value="UniProtKB"/>
</dbReference>
<dbReference type="GO" id="GO:0004843">
    <property type="term" value="F:cysteine-type deubiquitinase activity"/>
    <property type="evidence" value="ECO:0000250"/>
    <property type="project" value="UniProtKB"/>
</dbReference>
<dbReference type="GO" id="GO:0040029">
    <property type="term" value="P:epigenetic regulation of gene expression"/>
    <property type="evidence" value="ECO:0000250"/>
    <property type="project" value="UniProtKB"/>
</dbReference>
<dbReference type="GO" id="GO:0031507">
    <property type="term" value="P:heterochromatin formation"/>
    <property type="evidence" value="ECO:0000250"/>
    <property type="project" value="UniProtKB"/>
</dbReference>
<dbReference type="GO" id="GO:0016579">
    <property type="term" value="P:protein deubiquitination"/>
    <property type="evidence" value="ECO:0007669"/>
    <property type="project" value="TreeGrafter"/>
</dbReference>
<dbReference type="GO" id="GO:0007385">
    <property type="term" value="P:specification of segmental identity, abdomen"/>
    <property type="evidence" value="ECO:0007669"/>
    <property type="project" value="EnsemblMetazoa"/>
</dbReference>
<dbReference type="GO" id="GO:0006511">
    <property type="term" value="P:ubiquitin-dependent protein catabolic process"/>
    <property type="evidence" value="ECO:0007669"/>
    <property type="project" value="InterPro"/>
</dbReference>
<dbReference type="CDD" id="cd09617">
    <property type="entry name" value="Peptidase_C12_UCH37_BAP1"/>
    <property type="match status" value="1"/>
</dbReference>
<dbReference type="FunFam" id="3.40.532.10:FF:000002">
    <property type="entry name" value="Ubiquitin carboxyl-terminal hydrolase"/>
    <property type="match status" value="1"/>
</dbReference>
<dbReference type="FunFam" id="1.20.58.860:FF:000004">
    <property type="entry name" value="Ubiquitin carboxyl-terminal hydrolase calypso"/>
    <property type="match status" value="1"/>
</dbReference>
<dbReference type="Gene3D" id="1.20.58.860">
    <property type="match status" value="1"/>
</dbReference>
<dbReference type="Gene3D" id="3.40.532.10">
    <property type="entry name" value="Peptidase C12, ubiquitin carboxyl-terminal hydrolase"/>
    <property type="match status" value="1"/>
</dbReference>
<dbReference type="InterPro" id="IPR038765">
    <property type="entry name" value="Papain-like_cys_pep_sf"/>
</dbReference>
<dbReference type="InterPro" id="IPR001578">
    <property type="entry name" value="Peptidase_C12_UCH"/>
</dbReference>
<dbReference type="InterPro" id="IPR036959">
    <property type="entry name" value="Peptidase_C12_UCH_sf"/>
</dbReference>
<dbReference type="InterPro" id="IPR041507">
    <property type="entry name" value="UCH_C"/>
</dbReference>
<dbReference type="PANTHER" id="PTHR10589">
    <property type="entry name" value="UBIQUITIN CARBOXYL-TERMINAL HYDROLASE"/>
    <property type="match status" value="1"/>
</dbReference>
<dbReference type="PANTHER" id="PTHR10589:SF28">
    <property type="entry name" value="UBIQUITIN CARBOXYL-TERMINAL HYDROLASE BAP1"/>
    <property type="match status" value="1"/>
</dbReference>
<dbReference type="Pfam" id="PF01088">
    <property type="entry name" value="Peptidase_C12"/>
    <property type="match status" value="1"/>
</dbReference>
<dbReference type="Pfam" id="PF18031">
    <property type="entry name" value="UCH_C"/>
    <property type="match status" value="1"/>
</dbReference>
<dbReference type="PRINTS" id="PR00707">
    <property type="entry name" value="UBCTHYDRLASE"/>
</dbReference>
<dbReference type="SUPFAM" id="SSF54001">
    <property type="entry name" value="Cysteine proteinases"/>
    <property type="match status" value="1"/>
</dbReference>
<dbReference type="PROSITE" id="PS52048">
    <property type="entry name" value="UCH_DOMAIN"/>
    <property type="match status" value="1"/>
</dbReference>
<dbReference type="PROSITE" id="PS52049">
    <property type="entry name" value="ULD"/>
    <property type="match status" value="1"/>
</dbReference>